<accession>B6IBP0</accession>
<feature type="chain" id="PRO_1000147818" description="Uncharacterized Nudix hydrolase NudL">
    <location>
        <begin position="1"/>
        <end position="192"/>
    </location>
</feature>
<feature type="domain" description="Nudix hydrolase" evidence="1">
    <location>
        <begin position="29"/>
        <end position="160"/>
    </location>
</feature>
<feature type="short sequence motif" description="Nudix box">
    <location>
        <begin position="67"/>
        <end position="89"/>
    </location>
</feature>
<feature type="binding site" evidence="1">
    <location>
        <position position="83"/>
    </location>
    <ligand>
        <name>Mg(2+)</name>
        <dbReference type="ChEBI" id="CHEBI:18420"/>
    </ligand>
</feature>
<feature type="binding site" evidence="1">
    <location>
        <position position="87"/>
    </location>
    <ligand>
        <name>Mg(2+)</name>
        <dbReference type="ChEBI" id="CHEBI:18420"/>
    </ligand>
</feature>
<sequence>MEYRSLTLDDFLSRFQLLRPQINRETLNHRQAAVLIPIVRRPQPGLLLTQRSIHLRKHAGQVAFPGGAVDDTDASVIAAALREAEEEVAIPPSAVEVIGVLPPVDSVTGYQVTPVVGIIPPDLPYRASEDEVSAVFEMPLAQALHLGRYHPLDIYRRGDSHRVWLSWYEQYFVWGMTAGIIRELALQIGVKP</sequence>
<dbReference type="EC" id="3.6.1.-" evidence="1"/>
<dbReference type="EMBL" id="AP009240">
    <property type="protein sequence ID" value="BAG77511.1"/>
    <property type="molecule type" value="Genomic_DNA"/>
</dbReference>
<dbReference type="RefSeq" id="WP_000456725.1">
    <property type="nucleotide sequence ID" value="NC_011415.1"/>
</dbReference>
<dbReference type="SMR" id="B6IBP0"/>
<dbReference type="KEGG" id="ecy:ECSE_1987"/>
<dbReference type="HOGENOM" id="CLU_040940_5_2_6"/>
<dbReference type="Proteomes" id="UP000008199">
    <property type="component" value="Chromosome"/>
</dbReference>
<dbReference type="GO" id="GO:0010945">
    <property type="term" value="F:coenzyme A diphosphatase activity"/>
    <property type="evidence" value="ECO:0007669"/>
    <property type="project" value="InterPro"/>
</dbReference>
<dbReference type="GO" id="GO:0000287">
    <property type="term" value="F:magnesium ion binding"/>
    <property type="evidence" value="ECO:0007669"/>
    <property type="project" value="UniProtKB-UniRule"/>
</dbReference>
<dbReference type="GO" id="GO:0030145">
    <property type="term" value="F:manganese ion binding"/>
    <property type="evidence" value="ECO:0007669"/>
    <property type="project" value="UniProtKB-UniRule"/>
</dbReference>
<dbReference type="GO" id="GO:0009132">
    <property type="term" value="P:nucleoside diphosphate metabolic process"/>
    <property type="evidence" value="ECO:0007669"/>
    <property type="project" value="InterPro"/>
</dbReference>
<dbReference type="CDD" id="cd03426">
    <property type="entry name" value="NUDIX_CoAse_Nudt7"/>
    <property type="match status" value="1"/>
</dbReference>
<dbReference type="FunFam" id="3.90.79.10:FF:000013">
    <property type="entry name" value="Uncharacterized Nudix hydrolase NudL"/>
    <property type="match status" value="1"/>
</dbReference>
<dbReference type="Gene3D" id="3.90.79.10">
    <property type="entry name" value="Nucleoside Triphosphate Pyrophosphohydrolase"/>
    <property type="match status" value="1"/>
</dbReference>
<dbReference type="HAMAP" id="MF_01592">
    <property type="entry name" value="Nudix_NudL"/>
    <property type="match status" value="1"/>
</dbReference>
<dbReference type="InterPro" id="IPR045121">
    <property type="entry name" value="CoAse"/>
</dbReference>
<dbReference type="InterPro" id="IPR015797">
    <property type="entry name" value="NUDIX_hydrolase-like_dom_sf"/>
</dbReference>
<dbReference type="InterPro" id="IPR000086">
    <property type="entry name" value="NUDIX_hydrolase_dom"/>
</dbReference>
<dbReference type="InterPro" id="IPR000059">
    <property type="entry name" value="NUDIX_hydrolase_NudL_CS"/>
</dbReference>
<dbReference type="InterPro" id="IPR023735">
    <property type="entry name" value="Nudix_NudL"/>
</dbReference>
<dbReference type="NCBIfam" id="NF007980">
    <property type="entry name" value="PRK10707.1"/>
    <property type="match status" value="1"/>
</dbReference>
<dbReference type="PANTHER" id="PTHR12992:SF11">
    <property type="entry name" value="MITOCHONDRIAL COENZYME A DIPHOSPHATASE NUDT8"/>
    <property type="match status" value="1"/>
</dbReference>
<dbReference type="PANTHER" id="PTHR12992">
    <property type="entry name" value="NUDIX HYDROLASE"/>
    <property type="match status" value="1"/>
</dbReference>
<dbReference type="Pfam" id="PF00293">
    <property type="entry name" value="NUDIX"/>
    <property type="match status" value="1"/>
</dbReference>
<dbReference type="SUPFAM" id="SSF55811">
    <property type="entry name" value="Nudix"/>
    <property type="match status" value="1"/>
</dbReference>
<dbReference type="PROSITE" id="PS51462">
    <property type="entry name" value="NUDIX"/>
    <property type="match status" value="1"/>
</dbReference>
<dbReference type="PROSITE" id="PS01293">
    <property type="entry name" value="NUDIX_COA"/>
    <property type="match status" value="1"/>
</dbReference>
<comment type="function">
    <text evidence="1">Probably mediates the hydrolysis of some nucleoside diphosphate derivatives.</text>
</comment>
<comment type="cofactor">
    <cofactor evidence="1">
        <name>Mn(2+)</name>
        <dbReference type="ChEBI" id="CHEBI:29035"/>
    </cofactor>
    <cofactor evidence="1">
        <name>Mg(2+)</name>
        <dbReference type="ChEBI" id="CHEBI:18420"/>
    </cofactor>
</comment>
<comment type="similarity">
    <text evidence="1">Belongs to the Nudix hydrolase family. PCD1 subfamily.</text>
</comment>
<name>NUDL_ECOSE</name>
<gene>
    <name evidence="1" type="primary">nudL</name>
    <name type="ordered locus">ECSE_1987</name>
</gene>
<evidence type="ECO:0000255" key="1">
    <source>
        <dbReference type="HAMAP-Rule" id="MF_01592"/>
    </source>
</evidence>
<reference key="1">
    <citation type="journal article" date="2008" name="DNA Res.">
        <title>Complete genome sequence and comparative analysis of the wild-type commensal Escherichia coli strain SE11 isolated from a healthy adult.</title>
        <authorList>
            <person name="Oshima K."/>
            <person name="Toh H."/>
            <person name="Ogura Y."/>
            <person name="Sasamoto H."/>
            <person name="Morita H."/>
            <person name="Park S.-H."/>
            <person name="Ooka T."/>
            <person name="Iyoda S."/>
            <person name="Taylor T.D."/>
            <person name="Hayashi T."/>
            <person name="Itoh K."/>
            <person name="Hattori M."/>
        </authorList>
    </citation>
    <scope>NUCLEOTIDE SEQUENCE [LARGE SCALE GENOMIC DNA]</scope>
    <source>
        <strain>SE11</strain>
    </source>
</reference>
<protein>
    <recommendedName>
        <fullName evidence="1">Uncharacterized Nudix hydrolase NudL</fullName>
        <ecNumber evidence="1">3.6.1.-</ecNumber>
    </recommendedName>
</protein>
<organism>
    <name type="scientific">Escherichia coli (strain SE11)</name>
    <dbReference type="NCBI Taxonomy" id="409438"/>
    <lineage>
        <taxon>Bacteria</taxon>
        <taxon>Pseudomonadati</taxon>
        <taxon>Pseudomonadota</taxon>
        <taxon>Gammaproteobacteria</taxon>
        <taxon>Enterobacterales</taxon>
        <taxon>Enterobacteriaceae</taxon>
        <taxon>Escherichia</taxon>
    </lineage>
</organism>
<proteinExistence type="inferred from homology"/>
<keyword id="KW-0378">Hydrolase</keyword>
<keyword id="KW-0460">Magnesium</keyword>
<keyword id="KW-0464">Manganese</keyword>
<keyword id="KW-0479">Metal-binding</keyword>